<accession>Q9PD69</accession>
<comment type="function">
    <text evidence="1">Specifically catalyzes the removal of N-terminal proline residues from peptides.</text>
</comment>
<comment type="catalytic activity">
    <reaction>
        <text>Release of N-terminal proline from a peptide.</text>
        <dbReference type="EC" id="3.4.11.5"/>
    </reaction>
</comment>
<comment type="subcellular location">
    <subcellularLocation>
        <location evidence="1">Cytoplasm</location>
    </subcellularLocation>
</comment>
<comment type="similarity">
    <text evidence="3">Belongs to the peptidase S33 family.</text>
</comment>
<keyword id="KW-0031">Aminopeptidase</keyword>
<keyword id="KW-0963">Cytoplasm</keyword>
<keyword id="KW-0378">Hydrolase</keyword>
<keyword id="KW-0645">Protease</keyword>
<organism>
    <name type="scientific">Xylella fastidiosa (strain 9a5c)</name>
    <dbReference type="NCBI Taxonomy" id="160492"/>
    <lineage>
        <taxon>Bacteria</taxon>
        <taxon>Pseudomonadati</taxon>
        <taxon>Pseudomonadota</taxon>
        <taxon>Gammaproteobacteria</taxon>
        <taxon>Lysobacterales</taxon>
        <taxon>Lysobacteraceae</taxon>
        <taxon>Xylella</taxon>
    </lineage>
</organism>
<evidence type="ECO:0000250" key="1"/>
<evidence type="ECO:0000255" key="2"/>
<evidence type="ECO:0000305" key="3"/>
<name>PIP_XYLFA</name>
<protein>
    <recommendedName>
        <fullName>Proline iminopeptidase</fullName>
        <shortName>PIP</shortName>
        <ecNumber>3.4.11.5</ecNumber>
    </recommendedName>
    <alternativeName>
        <fullName>Prolyl aminopeptidase</fullName>
        <shortName>PAP</shortName>
    </alternativeName>
</protein>
<gene>
    <name type="primary">pip</name>
    <name type="ordered locus">XF_1510</name>
</gene>
<proteinExistence type="inferred from homology"/>
<reference key="1">
    <citation type="journal article" date="2000" name="Nature">
        <title>The genome sequence of the plant pathogen Xylella fastidiosa.</title>
        <authorList>
            <person name="Simpson A.J.G."/>
            <person name="Reinach F.C."/>
            <person name="Arruda P."/>
            <person name="Abreu F.A."/>
            <person name="Acencio M."/>
            <person name="Alvarenga R."/>
            <person name="Alves L.M.C."/>
            <person name="Araya J.E."/>
            <person name="Baia G.S."/>
            <person name="Baptista C.S."/>
            <person name="Barros M.H."/>
            <person name="Bonaccorsi E.D."/>
            <person name="Bordin S."/>
            <person name="Bove J.M."/>
            <person name="Briones M.R.S."/>
            <person name="Bueno M.R.P."/>
            <person name="Camargo A.A."/>
            <person name="Camargo L.E.A."/>
            <person name="Carraro D.M."/>
            <person name="Carrer H."/>
            <person name="Colauto N.B."/>
            <person name="Colombo C."/>
            <person name="Costa F.F."/>
            <person name="Costa M.C.R."/>
            <person name="Costa-Neto C.M."/>
            <person name="Coutinho L.L."/>
            <person name="Cristofani M."/>
            <person name="Dias-Neto E."/>
            <person name="Docena C."/>
            <person name="El-Dorry H."/>
            <person name="Facincani A.P."/>
            <person name="Ferreira A.J.S."/>
            <person name="Ferreira V.C.A."/>
            <person name="Ferro J.A."/>
            <person name="Fraga J.S."/>
            <person name="Franca S.C."/>
            <person name="Franco M.C."/>
            <person name="Frohme M."/>
            <person name="Furlan L.R."/>
            <person name="Garnier M."/>
            <person name="Goldman G.H."/>
            <person name="Goldman M.H.S."/>
            <person name="Gomes S.L."/>
            <person name="Gruber A."/>
            <person name="Ho P.L."/>
            <person name="Hoheisel J.D."/>
            <person name="Junqueira M.L."/>
            <person name="Kemper E.L."/>
            <person name="Kitajima J.P."/>
            <person name="Krieger J.E."/>
            <person name="Kuramae E.E."/>
            <person name="Laigret F."/>
            <person name="Lambais M.R."/>
            <person name="Leite L.C.C."/>
            <person name="Lemos E.G.M."/>
            <person name="Lemos M.V.F."/>
            <person name="Lopes S.A."/>
            <person name="Lopes C.R."/>
            <person name="Machado J.A."/>
            <person name="Machado M.A."/>
            <person name="Madeira A.M.B.N."/>
            <person name="Madeira H.M.F."/>
            <person name="Marino C.L."/>
            <person name="Marques M.V."/>
            <person name="Martins E.A.L."/>
            <person name="Martins E.M.F."/>
            <person name="Matsukuma A.Y."/>
            <person name="Menck C.F.M."/>
            <person name="Miracca E.C."/>
            <person name="Miyaki C.Y."/>
            <person name="Monteiro-Vitorello C.B."/>
            <person name="Moon D.H."/>
            <person name="Nagai M.A."/>
            <person name="Nascimento A.L.T.O."/>
            <person name="Netto L.E.S."/>
            <person name="Nhani A. Jr."/>
            <person name="Nobrega F.G."/>
            <person name="Nunes L.R."/>
            <person name="Oliveira M.A."/>
            <person name="de Oliveira M.C."/>
            <person name="de Oliveira R.C."/>
            <person name="Palmieri D.A."/>
            <person name="Paris A."/>
            <person name="Peixoto B.R."/>
            <person name="Pereira G.A.G."/>
            <person name="Pereira H.A. Jr."/>
            <person name="Pesquero J.B."/>
            <person name="Quaggio R.B."/>
            <person name="Roberto P.G."/>
            <person name="Rodrigues V."/>
            <person name="de Rosa A.J.M."/>
            <person name="de Rosa V.E. Jr."/>
            <person name="de Sa R.G."/>
            <person name="Santelli R.V."/>
            <person name="Sawasaki H.E."/>
            <person name="da Silva A.C.R."/>
            <person name="da Silva A.M."/>
            <person name="da Silva F.R."/>
            <person name="Silva W.A. Jr."/>
            <person name="da Silveira J.F."/>
            <person name="Silvestri M.L.Z."/>
            <person name="Siqueira W.J."/>
            <person name="de Souza A.A."/>
            <person name="de Souza A.P."/>
            <person name="Terenzi M.F."/>
            <person name="Truffi D."/>
            <person name="Tsai S.M."/>
            <person name="Tsuhako M.H."/>
            <person name="Vallada H."/>
            <person name="Van Sluys M.A."/>
            <person name="Verjovski-Almeida S."/>
            <person name="Vettore A.L."/>
            <person name="Zago M.A."/>
            <person name="Zatz M."/>
            <person name="Meidanis J."/>
            <person name="Setubal J.C."/>
        </authorList>
    </citation>
    <scope>NUCLEOTIDE SEQUENCE [LARGE SCALE GENOMIC DNA]</scope>
    <source>
        <strain>9a5c</strain>
    </source>
</reference>
<dbReference type="EC" id="3.4.11.5"/>
<dbReference type="EMBL" id="AE003849">
    <property type="protein sequence ID" value="AAF84319.1"/>
    <property type="molecule type" value="Genomic_DNA"/>
</dbReference>
<dbReference type="PIR" id="E82671">
    <property type="entry name" value="E82671"/>
</dbReference>
<dbReference type="RefSeq" id="WP_010894011.1">
    <property type="nucleotide sequence ID" value="NC_002488.3"/>
</dbReference>
<dbReference type="SMR" id="Q9PD69"/>
<dbReference type="STRING" id="160492.XF_1510"/>
<dbReference type="ESTHER" id="xylfa-pip">
    <property type="family name" value="Proline_iminopeptidase"/>
</dbReference>
<dbReference type="MEROPS" id="S33.001"/>
<dbReference type="KEGG" id="xfa:XF_1510"/>
<dbReference type="eggNOG" id="COG0596">
    <property type="taxonomic scope" value="Bacteria"/>
</dbReference>
<dbReference type="HOGENOM" id="CLU_043739_2_2_6"/>
<dbReference type="Proteomes" id="UP000000812">
    <property type="component" value="Chromosome"/>
</dbReference>
<dbReference type="GO" id="GO:0005737">
    <property type="term" value="C:cytoplasm"/>
    <property type="evidence" value="ECO:0007669"/>
    <property type="project" value="UniProtKB-SubCell"/>
</dbReference>
<dbReference type="GO" id="GO:0004177">
    <property type="term" value="F:aminopeptidase activity"/>
    <property type="evidence" value="ECO:0007669"/>
    <property type="project" value="UniProtKB-KW"/>
</dbReference>
<dbReference type="GO" id="GO:0006508">
    <property type="term" value="P:proteolysis"/>
    <property type="evidence" value="ECO:0007669"/>
    <property type="project" value="UniProtKB-KW"/>
</dbReference>
<dbReference type="Gene3D" id="3.40.50.1820">
    <property type="entry name" value="alpha/beta hydrolase"/>
    <property type="match status" value="1"/>
</dbReference>
<dbReference type="InterPro" id="IPR000073">
    <property type="entry name" value="AB_hydrolase_1"/>
</dbReference>
<dbReference type="InterPro" id="IPR029058">
    <property type="entry name" value="AB_hydrolase_fold"/>
</dbReference>
<dbReference type="InterPro" id="IPR002410">
    <property type="entry name" value="Peptidase_S33"/>
</dbReference>
<dbReference type="InterPro" id="IPR005944">
    <property type="entry name" value="Pro_iminopeptidase"/>
</dbReference>
<dbReference type="NCBIfam" id="TIGR01249">
    <property type="entry name" value="pro_imino_pep_1"/>
    <property type="match status" value="1"/>
</dbReference>
<dbReference type="PANTHER" id="PTHR43722">
    <property type="entry name" value="PROLINE IMINOPEPTIDASE"/>
    <property type="match status" value="1"/>
</dbReference>
<dbReference type="PANTHER" id="PTHR43722:SF1">
    <property type="entry name" value="PROLINE IMINOPEPTIDASE"/>
    <property type="match status" value="1"/>
</dbReference>
<dbReference type="Pfam" id="PF00561">
    <property type="entry name" value="Abhydrolase_1"/>
    <property type="match status" value="1"/>
</dbReference>
<dbReference type="PIRSF" id="PIRSF006431">
    <property type="entry name" value="Pept_S33"/>
    <property type="match status" value="1"/>
</dbReference>
<dbReference type="PRINTS" id="PR00111">
    <property type="entry name" value="ABHYDROLASE"/>
</dbReference>
<dbReference type="PRINTS" id="PR00793">
    <property type="entry name" value="PROAMNOPTASE"/>
</dbReference>
<dbReference type="SUPFAM" id="SSF53474">
    <property type="entry name" value="alpha/beta-Hydrolases"/>
    <property type="match status" value="1"/>
</dbReference>
<sequence>MRTLYPEVTPFEHGILCVDDNHRLYYEQCGNPHGKPVVILHGGPGSGCNDKMRRFHDPDKYRIVLFDQRGAGRSTPHANLTNNTTWDLVADIEKLRVALGITRWQVFGGSWGSTLALAYAQTHPEQTTELVLRGIFMLRRWELEWFYQEGASHLFPDAWDRYIAVIPPVERHDLISAFHRRLTSEDEATRLAAAQAWSLWEGATSCLYMDQDFIASHENPHFALAFARIENHYFVNGGFFEVENQLLRDAQRIANIPGVIVHGRYDVVCPLQNAWDLHKVWPKASLKITPGAGHSAFEPQNIDALVCATDSFV</sequence>
<feature type="chain" id="PRO_0000080848" description="Proline iminopeptidase">
    <location>
        <begin position="1"/>
        <end position="313"/>
    </location>
</feature>
<feature type="domain" description="AB hydrolase-1" evidence="2">
    <location>
        <begin position="35"/>
        <end position="298"/>
    </location>
</feature>
<feature type="active site" description="Nucleophile" evidence="1">
    <location>
        <position position="110"/>
    </location>
</feature>
<feature type="active site" evidence="1">
    <location>
        <position position="266"/>
    </location>
</feature>
<feature type="active site" description="Proton donor" evidence="1">
    <location>
        <position position="294"/>
    </location>
</feature>